<comment type="function">
    <text evidence="1">Cell wall formation.</text>
</comment>
<comment type="catalytic activity">
    <reaction evidence="1">
        <text>UDP-N-acetyl-alpha-D-muramate + NADP(+) = UDP-N-acetyl-3-O-(1-carboxyvinyl)-alpha-D-glucosamine + NADPH + H(+)</text>
        <dbReference type="Rhea" id="RHEA:12248"/>
        <dbReference type="ChEBI" id="CHEBI:15378"/>
        <dbReference type="ChEBI" id="CHEBI:57783"/>
        <dbReference type="ChEBI" id="CHEBI:58349"/>
        <dbReference type="ChEBI" id="CHEBI:68483"/>
        <dbReference type="ChEBI" id="CHEBI:70757"/>
        <dbReference type="EC" id="1.3.1.98"/>
    </reaction>
</comment>
<comment type="cofactor">
    <cofactor evidence="1">
        <name>FAD</name>
        <dbReference type="ChEBI" id="CHEBI:57692"/>
    </cofactor>
</comment>
<comment type="pathway">
    <text evidence="1">Cell wall biogenesis; peptidoglycan biosynthesis.</text>
</comment>
<comment type="subcellular location">
    <subcellularLocation>
        <location evidence="1">Cytoplasm</location>
    </subcellularLocation>
</comment>
<comment type="similarity">
    <text evidence="1">Belongs to the MurB family.</text>
</comment>
<name>MURB_PSEF5</name>
<keyword id="KW-0131">Cell cycle</keyword>
<keyword id="KW-0132">Cell division</keyword>
<keyword id="KW-0133">Cell shape</keyword>
<keyword id="KW-0961">Cell wall biogenesis/degradation</keyword>
<keyword id="KW-0963">Cytoplasm</keyword>
<keyword id="KW-0274">FAD</keyword>
<keyword id="KW-0285">Flavoprotein</keyword>
<keyword id="KW-0521">NADP</keyword>
<keyword id="KW-0560">Oxidoreductase</keyword>
<keyword id="KW-0573">Peptidoglycan synthesis</keyword>
<dbReference type="EC" id="1.3.1.98" evidence="1"/>
<dbReference type="EMBL" id="CP000076">
    <property type="protein sequence ID" value="AAY91071.1"/>
    <property type="molecule type" value="Genomic_DNA"/>
</dbReference>
<dbReference type="RefSeq" id="WP_011060106.1">
    <property type="nucleotide sequence ID" value="NC_004129.6"/>
</dbReference>
<dbReference type="SMR" id="Q4KFT1"/>
<dbReference type="STRING" id="220664.PFL_1782"/>
<dbReference type="GeneID" id="57474802"/>
<dbReference type="KEGG" id="pfl:PFL_1782"/>
<dbReference type="PATRIC" id="fig|220664.5.peg.1816"/>
<dbReference type="eggNOG" id="COG0812">
    <property type="taxonomic scope" value="Bacteria"/>
</dbReference>
<dbReference type="HOGENOM" id="CLU_035304_0_0_6"/>
<dbReference type="UniPathway" id="UPA00219"/>
<dbReference type="Proteomes" id="UP000008540">
    <property type="component" value="Chromosome"/>
</dbReference>
<dbReference type="GO" id="GO:0005829">
    <property type="term" value="C:cytosol"/>
    <property type="evidence" value="ECO:0007669"/>
    <property type="project" value="TreeGrafter"/>
</dbReference>
<dbReference type="GO" id="GO:0071949">
    <property type="term" value="F:FAD binding"/>
    <property type="evidence" value="ECO:0007669"/>
    <property type="project" value="InterPro"/>
</dbReference>
<dbReference type="GO" id="GO:0008762">
    <property type="term" value="F:UDP-N-acetylmuramate dehydrogenase activity"/>
    <property type="evidence" value="ECO:0007669"/>
    <property type="project" value="UniProtKB-UniRule"/>
</dbReference>
<dbReference type="GO" id="GO:0051301">
    <property type="term" value="P:cell division"/>
    <property type="evidence" value="ECO:0007669"/>
    <property type="project" value="UniProtKB-KW"/>
</dbReference>
<dbReference type="GO" id="GO:0071555">
    <property type="term" value="P:cell wall organization"/>
    <property type="evidence" value="ECO:0007669"/>
    <property type="project" value="UniProtKB-KW"/>
</dbReference>
<dbReference type="GO" id="GO:0009252">
    <property type="term" value="P:peptidoglycan biosynthetic process"/>
    <property type="evidence" value="ECO:0007669"/>
    <property type="project" value="UniProtKB-UniRule"/>
</dbReference>
<dbReference type="GO" id="GO:0008360">
    <property type="term" value="P:regulation of cell shape"/>
    <property type="evidence" value="ECO:0007669"/>
    <property type="project" value="UniProtKB-KW"/>
</dbReference>
<dbReference type="Gene3D" id="3.30.465.10">
    <property type="match status" value="1"/>
</dbReference>
<dbReference type="Gene3D" id="3.90.78.10">
    <property type="entry name" value="UDP-N-acetylenolpyruvoylglucosamine reductase, C-terminal domain"/>
    <property type="match status" value="1"/>
</dbReference>
<dbReference type="Gene3D" id="3.30.43.10">
    <property type="entry name" value="Uridine Diphospho-n-acetylenolpyruvylglucosamine Reductase, domain 2"/>
    <property type="match status" value="1"/>
</dbReference>
<dbReference type="HAMAP" id="MF_00037">
    <property type="entry name" value="MurB"/>
    <property type="match status" value="1"/>
</dbReference>
<dbReference type="InterPro" id="IPR016166">
    <property type="entry name" value="FAD-bd_PCMH"/>
</dbReference>
<dbReference type="InterPro" id="IPR036318">
    <property type="entry name" value="FAD-bd_PCMH-like_sf"/>
</dbReference>
<dbReference type="InterPro" id="IPR016167">
    <property type="entry name" value="FAD-bd_PCMH_sub1"/>
</dbReference>
<dbReference type="InterPro" id="IPR016169">
    <property type="entry name" value="FAD-bd_PCMH_sub2"/>
</dbReference>
<dbReference type="InterPro" id="IPR003170">
    <property type="entry name" value="MurB"/>
</dbReference>
<dbReference type="InterPro" id="IPR011601">
    <property type="entry name" value="MurB_C"/>
</dbReference>
<dbReference type="InterPro" id="IPR036635">
    <property type="entry name" value="MurB_C_sf"/>
</dbReference>
<dbReference type="InterPro" id="IPR006094">
    <property type="entry name" value="Oxid_FAD_bind_N"/>
</dbReference>
<dbReference type="NCBIfam" id="TIGR00179">
    <property type="entry name" value="murB"/>
    <property type="match status" value="1"/>
</dbReference>
<dbReference type="NCBIfam" id="NF000755">
    <property type="entry name" value="PRK00046.1"/>
    <property type="match status" value="1"/>
</dbReference>
<dbReference type="NCBIfam" id="NF010478">
    <property type="entry name" value="PRK13903.1"/>
    <property type="match status" value="1"/>
</dbReference>
<dbReference type="PANTHER" id="PTHR21071">
    <property type="entry name" value="UDP-N-ACETYLENOLPYRUVOYLGLUCOSAMINE REDUCTASE"/>
    <property type="match status" value="1"/>
</dbReference>
<dbReference type="PANTHER" id="PTHR21071:SF4">
    <property type="entry name" value="UDP-N-ACETYLENOLPYRUVOYLGLUCOSAMINE REDUCTASE"/>
    <property type="match status" value="1"/>
</dbReference>
<dbReference type="Pfam" id="PF01565">
    <property type="entry name" value="FAD_binding_4"/>
    <property type="match status" value="1"/>
</dbReference>
<dbReference type="Pfam" id="PF02873">
    <property type="entry name" value="MurB_C"/>
    <property type="match status" value="1"/>
</dbReference>
<dbReference type="SUPFAM" id="SSF56176">
    <property type="entry name" value="FAD-binding/transporter-associated domain-like"/>
    <property type="match status" value="1"/>
</dbReference>
<dbReference type="SUPFAM" id="SSF56194">
    <property type="entry name" value="Uridine diphospho-N-Acetylenolpyruvylglucosamine reductase, MurB, C-terminal domain"/>
    <property type="match status" value="1"/>
</dbReference>
<dbReference type="PROSITE" id="PS51387">
    <property type="entry name" value="FAD_PCMH"/>
    <property type="match status" value="1"/>
</dbReference>
<reference key="1">
    <citation type="journal article" date="2005" name="Nat. Biotechnol.">
        <title>Complete genome sequence of the plant commensal Pseudomonas fluorescens Pf-5.</title>
        <authorList>
            <person name="Paulsen I.T."/>
            <person name="Press C.M."/>
            <person name="Ravel J."/>
            <person name="Kobayashi D.Y."/>
            <person name="Myers G.S.A."/>
            <person name="Mavrodi D.V."/>
            <person name="DeBoy R.T."/>
            <person name="Seshadri R."/>
            <person name="Ren Q."/>
            <person name="Madupu R."/>
            <person name="Dodson R.J."/>
            <person name="Durkin A.S."/>
            <person name="Brinkac L.M."/>
            <person name="Daugherty S.C."/>
            <person name="Sullivan S.A."/>
            <person name="Rosovitz M.J."/>
            <person name="Gwinn M.L."/>
            <person name="Zhou L."/>
            <person name="Schneider D.J."/>
            <person name="Cartinhour S.W."/>
            <person name="Nelson W.C."/>
            <person name="Weidman J."/>
            <person name="Watkins K."/>
            <person name="Tran K."/>
            <person name="Khouri H."/>
            <person name="Pierson E.A."/>
            <person name="Pierson L.S. III"/>
            <person name="Thomashow L.S."/>
            <person name="Loper J.E."/>
        </authorList>
    </citation>
    <scope>NUCLEOTIDE SEQUENCE [LARGE SCALE GENOMIC DNA]</scope>
    <source>
        <strain>ATCC BAA-477 / NRRL B-23932 / Pf-5</strain>
    </source>
</reference>
<feature type="chain" id="PRO_0000224707" description="UDP-N-acetylenolpyruvoylglucosamine reductase">
    <location>
        <begin position="1"/>
        <end position="339"/>
    </location>
</feature>
<feature type="domain" description="FAD-binding PCMH-type" evidence="1">
    <location>
        <begin position="18"/>
        <end position="189"/>
    </location>
</feature>
<feature type="active site" evidence="1">
    <location>
        <position position="166"/>
    </location>
</feature>
<feature type="active site" description="Proton donor" evidence="1">
    <location>
        <position position="239"/>
    </location>
</feature>
<feature type="active site" evidence="1">
    <location>
        <position position="335"/>
    </location>
</feature>
<gene>
    <name evidence="1" type="primary">murB</name>
    <name type="ordered locus">PFL_1782</name>
</gene>
<accession>Q4KFT1</accession>
<sequence length="339" mass="37215">MTLDIQADVSLKPFNSFGVEVKAKWFAQAHSDDEVREALAYCATHQLPLLVIGGGSNLLLTADIQALVLRMATRGIRLLSDDGQRVVVEAEAGETWHPFVQWTLEQGLSGLENLSLIPGTVGAAPMQNIGAYGVEIKDVFAGLTALDRQTGELREFDLAQCQFAYRDSLFKHQAGRWLILRVRFALNRVDHLHLEYGPVRQRLSEQGIEQPTASDVSRAICSIRSEKLPDPAVLGNAGSFFKNPVVPAALAAQIKQSHPGLVGYPQADGQVKLAAGWLIEQAGWKGFREADAGVHRLQSLVLVNYGGASGLQLLELARRIQRDIAERFSVELEMEPNLY</sequence>
<evidence type="ECO:0000255" key="1">
    <source>
        <dbReference type="HAMAP-Rule" id="MF_00037"/>
    </source>
</evidence>
<organism>
    <name type="scientific">Pseudomonas fluorescens (strain ATCC BAA-477 / NRRL B-23932 / Pf-5)</name>
    <dbReference type="NCBI Taxonomy" id="220664"/>
    <lineage>
        <taxon>Bacteria</taxon>
        <taxon>Pseudomonadati</taxon>
        <taxon>Pseudomonadota</taxon>
        <taxon>Gammaproteobacteria</taxon>
        <taxon>Pseudomonadales</taxon>
        <taxon>Pseudomonadaceae</taxon>
        <taxon>Pseudomonas</taxon>
    </lineage>
</organism>
<protein>
    <recommendedName>
        <fullName evidence="1">UDP-N-acetylenolpyruvoylglucosamine reductase</fullName>
        <ecNumber evidence="1">1.3.1.98</ecNumber>
    </recommendedName>
    <alternativeName>
        <fullName evidence="1">UDP-N-acetylmuramate dehydrogenase</fullName>
    </alternativeName>
</protein>
<proteinExistence type="inferred from homology"/>